<reference key="1">
    <citation type="journal article" date="2009" name="PLoS Pathog.">
        <title>Genomic evidence for the evolution of Streptococcus equi: host restriction, increased virulence, and genetic exchange with human pathogens.</title>
        <authorList>
            <person name="Holden M.T.G."/>
            <person name="Heather Z."/>
            <person name="Paillot R."/>
            <person name="Steward K.F."/>
            <person name="Webb K."/>
            <person name="Ainslie F."/>
            <person name="Jourdan T."/>
            <person name="Bason N.C."/>
            <person name="Holroyd N.E."/>
            <person name="Mungall K."/>
            <person name="Quail M.A."/>
            <person name="Sanders M."/>
            <person name="Simmonds M."/>
            <person name="Willey D."/>
            <person name="Brooks K."/>
            <person name="Aanensen D.M."/>
            <person name="Spratt B.G."/>
            <person name="Jolley K.A."/>
            <person name="Maiden M.C.J."/>
            <person name="Kehoe M."/>
            <person name="Chanter N."/>
            <person name="Bentley S.D."/>
            <person name="Robinson C."/>
            <person name="Maskell D.J."/>
            <person name="Parkhill J."/>
            <person name="Waller A.S."/>
        </authorList>
    </citation>
    <scope>NUCLEOTIDE SEQUENCE [LARGE SCALE GENOMIC DNA]</scope>
    <source>
        <strain>H70</strain>
    </source>
</reference>
<accession>C0MGC4</accession>
<gene>
    <name evidence="1" type="primary">mutL</name>
    <name type="ordered locus">SZO_18720</name>
</gene>
<evidence type="ECO:0000255" key="1">
    <source>
        <dbReference type="HAMAP-Rule" id="MF_00149"/>
    </source>
</evidence>
<organism>
    <name type="scientific">Streptococcus equi subsp. zooepidemicus (strain H70)</name>
    <dbReference type="NCBI Taxonomy" id="553483"/>
    <lineage>
        <taxon>Bacteria</taxon>
        <taxon>Bacillati</taxon>
        <taxon>Bacillota</taxon>
        <taxon>Bacilli</taxon>
        <taxon>Lactobacillales</taxon>
        <taxon>Streptococcaceae</taxon>
        <taxon>Streptococcus</taxon>
    </lineage>
</organism>
<protein>
    <recommendedName>
        <fullName evidence="1">DNA mismatch repair protein MutL</fullName>
    </recommendedName>
</protein>
<comment type="function">
    <text evidence="1">This protein is involved in the repair of mismatches in DNA. It is required for dam-dependent methyl-directed DNA mismatch repair. May act as a 'molecular matchmaker', a protein that promotes the formation of a stable complex between two or more DNA-binding proteins in an ATP-dependent manner without itself being part of a final effector complex.</text>
</comment>
<comment type="similarity">
    <text evidence="1">Belongs to the DNA mismatch repair MutL/HexB family.</text>
</comment>
<proteinExistence type="inferred from homology"/>
<dbReference type="EMBL" id="FM204884">
    <property type="protein sequence ID" value="CAX00809.1"/>
    <property type="molecule type" value="Genomic_DNA"/>
</dbReference>
<dbReference type="SMR" id="C0MGC4"/>
<dbReference type="KEGG" id="seq:SZO_18720"/>
<dbReference type="eggNOG" id="COG0323">
    <property type="taxonomic scope" value="Bacteria"/>
</dbReference>
<dbReference type="HOGENOM" id="CLU_004131_4_1_9"/>
<dbReference type="Proteomes" id="UP000001368">
    <property type="component" value="Chromosome"/>
</dbReference>
<dbReference type="GO" id="GO:0032300">
    <property type="term" value="C:mismatch repair complex"/>
    <property type="evidence" value="ECO:0007669"/>
    <property type="project" value="InterPro"/>
</dbReference>
<dbReference type="GO" id="GO:0005524">
    <property type="term" value="F:ATP binding"/>
    <property type="evidence" value="ECO:0007669"/>
    <property type="project" value="InterPro"/>
</dbReference>
<dbReference type="GO" id="GO:0016887">
    <property type="term" value="F:ATP hydrolysis activity"/>
    <property type="evidence" value="ECO:0007669"/>
    <property type="project" value="InterPro"/>
</dbReference>
<dbReference type="GO" id="GO:0140664">
    <property type="term" value="F:ATP-dependent DNA damage sensor activity"/>
    <property type="evidence" value="ECO:0007669"/>
    <property type="project" value="InterPro"/>
</dbReference>
<dbReference type="GO" id="GO:0030983">
    <property type="term" value="F:mismatched DNA binding"/>
    <property type="evidence" value="ECO:0007669"/>
    <property type="project" value="InterPro"/>
</dbReference>
<dbReference type="GO" id="GO:0006298">
    <property type="term" value="P:mismatch repair"/>
    <property type="evidence" value="ECO:0007669"/>
    <property type="project" value="UniProtKB-UniRule"/>
</dbReference>
<dbReference type="CDD" id="cd16926">
    <property type="entry name" value="HATPase_MutL-MLH-PMS-like"/>
    <property type="match status" value="1"/>
</dbReference>
<dbReference type="CDD" id="cd00782">
    <property type="entry name" value="MutL_Trans"/>
    <property type="match status" value="1"/>
</dbReference>
<dbReference type="FunFam" id="3.30.1370.100:FF:000004">
    <property type="entry name" value="DNA mismatch repair endonuclease MutL"/>
    <property type="match status" value="1"/>
</dbReference>
<dbReference type="FunFam" id="3.30.565.10:FF:000003">
    <property type="entry name" value="DNA mismatch repair endonuclease MutL"/>
    <property type="match status" value="1"/>
</dbReference>
<dbReference type="Gene3D" id="3.30.230.10">
    <property type="match status" value="1"/>
</dbReference>
<dbReference type="Gene3D" id="3.30.565.10">
    <property type="entry name" value="Histidine kinase-like ATPase, C-terminal domain"/>
    <property type="match status" value="1"/>
</dbReference>
<dbReference type="Gene3D" id="3.30.1540.20">
    <property type="entry name" value="MutL, C-terminal domain, dimerisation subdomain"/>
    <property type="match status" value="1"/>
</dbReference>
<dbReference type="Gene3D" id="3.30.1370.100">
    <property type="entry name" value="MutL, C-terminal domain, regulatory subdomain"/>
    <property type="match status" value="1"/>
</dbReference>
<dbReference type="HAMAP" id="MF_00149">
    <property type="entry name" value="DNA_mis_repair"/>
    <property type="match status" value="1"/>
</dbReference>
<dbReference type="InterPro" id="IPR014762">
    <property type="entry name" value="DNA_mismatch_repair_CS"/>
</dbReference>
<dbReference type="InterPro" id="IPR020667">
    <property type="entry name" value="DNA_mismatch_repair_MutL"/>
</dbReference>
<dbReference type="InterPro" id="IPR013507">
    <property type="entry name" value="DNA_mismatch_S5_2-like"/>
</dbReference>
<dbReference type="InterPro" id="IPR036890">
    <property type="entry name" value="HATPase_C_sf"/>
</dbReference>
<dbReference type="InterPro" id="IPR002099">
    <property type="entry name" value="MutL/Mlh/PMS"/>
</dbReference>
<dbReference type="InterPro" id="IPR038973">
    <property type="entry name" value="MutL/Mlh/Pms-like"/>
</dbReference>
<dbReference type="InterPro" id="IPR014790">
    <property type="entry name" value="MutL_C"/>
</dbReference>
<dbReference type="InterPro" id="IPR042120">
    <property type="entry name" value="MutL_C_dimsub"/>
</dbReference>
<dbReference type="InterPro" id="IPR042121">
    <property type="entry name" value="MutL_C_regsub"/>
</dbReference>
<dbReference type="InterPro" id="IPR037198">
    <property type="entry name" value="MutL_C_sf"/>
</dbReference>
<dbReference type="InterPro" id="IPR020568">
    <property type="entry name" value="Ribosomal_Su5_D2-typ_SF"/>
</dbReference>
<dbReference type="InterPro" id="IPR014721">
    <property type="entry name" value="Ribsml_uS5_D2-typ_fold_subgr"/>
</dbReference>
<dbReference type="NCBIfam" id="TIGR00585">
    <property type="entry name" value="mutl"/>
    <property type="match status" value="1"/>
</dbReference>
<dbReference type="NCBIfam" id="NF000950">
    <property type="entry name" value="PRK00095.1-3"/>
    <property type="match status" value="1"/>
</dbReference>
<dbReference type="PANTHER" id="PTHR10073">
    <property type="entry name" value="DNA MISMATCH REPAIR PROTEIN MLH, PMS, MUTL"/>
    <property type="match status" value="1"/>
</dbReference>
<dbReference type="PANTHER" id="PTHR10073:SF12">
    <property type="entry name" value="DNA MISMATCH REPAIR PROTEIN MLH1"/>
    <property type="match status" value="1"/>
</dbReference>
<dbReference type="Pfam" id="PF01119">
    <property type="entry name" value="DNA_mis_repair"/>
    <property type="match status" value="1"/>
</dbReference>
<dbReference type="Pfam" id="PF13589">
    <property type="entry name" value="HATPase_c_3"/>
    <property type="match status" value="1"/>
</dbReference>
<dbReference type="Pfam" id="PF08676">
    <property type="entry name" value="MutL_C"/>
    <property type="match status" value="1"/>
</dbReference>
<dbReference type="SMART" id="SM01340">
    <property type="entry name" value="DNA_mis_repair"/>
    <property type="match status" value="1"/>
</dbReference>
<dbReference type="SMART" id="SM00853">
    <property type="entry name" value="MutL_C"/>
    <property type="match status" value="1"/>
</dbReference>
<dbReference type="SUPFAM" id="SSF55874">
    <property type="entry name" value="ATPase domain of HSP90 chaperone/DNA topoisomerase II/histidine kinase"/>
    <property type="match status" value="1"/>
</dbReference>
<dbReference type="SUPFAM" id="SSF118116">
    <property type="entry name" value="DNA mismatch repair protein MutL"/>
    <property type="match status" value="1"/>
</dbReference>
<dbReference type="SUPFAM" id="SSF54211">
    <property type="entry name" value="Ribosomal protein S5 domain 2-like"/>
    <property type="match status" value="1"/>
</dbReference>
<dbReference type="PROSITE" id="PS00058">
    <property type="entry name" value="DNA_MISMATCH_REPAIR_1"/>
    <property type="match status" value="1"/>
</dbReference>
<name>MUTL_STRS7</name>
<keyword id="KW-0227">DNA damage</keyword>
<keyword id="KW-0234">DNA repair</keyword>
<feature type="chain" id="PRO_1000203398" description="DNA mismatch repair protein MutL">
    <location>
        <begin position="1"/>
        <end position="660"/>
    </location>
</feature>
<sequence length="660" mass="74150">MTTIIELPEVLANQIAAGEVIERPASVVKELVENAIDAKSSQITVEIEESGLKMIQITDNGEGMSHEDLPLSLRRHATSKIKSQSDLFRIRTLGFRGEALPSVASISKLTIKTATAEAEHGSILVASGGKIEQLEAVSTPVGTKIKVENLFYNTPARLKYMKSLQAELAHVVDVVNRLSLAHPEIAFTLISDGKQLTQTSGTGDLRQALAGIYGLNTAKKMIDISSADLDFEVGGFVSLPELTRANRNYITILINGRYIKNFLLNRAILDGYGSKLMVGRFPIAVIDIQIDPYLADVNVHPTKQEIRISKERELMALISTAISESLREQDLIPDALENLARSSTRSFSKPEQTSLPLQPSQLYYDPQKNDFFTKETVVSEDSPQGFNHEVLIDSDVKQVDNLQVTKTESEAAAPSVKYASRPDPMLSDGEHPGLDVHNKQKLSQMLDRLENEEQSVFPELDYFGQMHGTYLFAQGRDGLFIIDQHAAQERVKYEYYRDKIGEVDNSLQQLLVPYLFEFSGSDFINLQEKMSLLNEVGIYLEPYGNHTFILREHPIWMKETEIESGVYEMCDMLLLTNEVSIKTYRAELAIMMSCKHSIKANHSLDDYSARQLLLQLAQCKNPYNCPHGRPVLINFSKADMEKMFRRIQENHTSLRELGKY</sequence>